<proteinExistence type="inferred from homology"/>
<gene>
    <name evidence="1" type="primary">glgA</name>
    <name type="ordered locus">SPD_1008</name>
</gene>
<evidence type="ECO:0000255" key="1">
    <source>
        <dbReference type="HAMAP-Rule" id="MF_00484"/>
    </source>
</evidence>
<comment type="function">
    <text evidence="1">Synthesizes alpha-1,4-glucan chains using ADP-glucose.</text>
</comment>
<comment type="catalytic activity">
    <reaction evidence="1">
        <text>[(1-&gt;4)-alpha-D-glucosyl](n) + ADP-alpha-D-glucose = [(1-&gt;4)-alpha-D-glucosyl](n+1) + ADP + H(+)</text>
        <dbReference type="Rhea" id="RHEA:18189"/>
        <dbReference type="Rhea" id="RHEA-COMP:9584"/>
        <dbReference type="Rhea" id="RHEA-COMP:9587"/>
        <dbReference type="ChEBI" id="CHEBI:15378"/>
        <dbReference type="ChEBI" id="CHEBI:15444"/>
        <dbReference type="ChEBI" id="CHEBI:57498"/>
        <dbReference type="ChEBI" id="CHEBI:456216"/>
        <dbReference type="EC" id="2.4.1.21"/>
    </reaction>
</comment>
<comment type="pathway">
    <text evidence="1">Glycan biosynthesis; glycogen biosynthesis.</text>
</comment>
<comment type="similarity">
    <text evidence="1">Belongs to the glycosyltransferase 1 family. Bacterial/plant glycogen synthase subfamily.</text>
</comment>
<accession>Q04KG5</accession>
<feature type="chain" id="PRO_1000014384" description="Glycogen synthase">
    <location>
        <begin position="1"/>
        <end position="477"/>
    </location>
</feature>
<feature type="binding site" evidence="1">
    <location>
        <position position="15"/>
    </location>
    <ligand>
        <name>ADP-alpha-D-glucose</name>
        <dbReference type="ChEBI" id="CHEBI:57498"/>
    </ligand>
</feature>
<protein>
    <recommendedName>
        <fullName evidence="1">Glycogen synthase</fullName>
        <ecNumber evidence="1">2.4.1.21</ecNumber>
    </recommendedName>
    <alternativeName>
        <fullName evidence="1">Starch [bacterial glycogen] synthase</fullName>
    </alternativeName>
</protein>
<organism>
    <name type="scientific">Streptococcus pneumoniae serotype 2 (strain D39 / NCTC 7466)</name>
    <dbReference type="NCBI Taxonomy" id="373153"/>
    <lineage>
        <taxon>Bacteria</taxon>
        <taxon>Bacillati</taxon>
        <taxon>Bacillota</taxon>
        <taxon>Bacilli</taxon>
        <taxon>Lactobacillales</taxon>
        <taxon>Streptococcaceae</taxon>
        <taxon>Streptococcus</taxon>
    </lineage>
</organism>
<sequence length="477" mass="54168">MKILFVAAEGAPFSKTGGLGDVIGALPKSLVKAGHEVAVILPYYDMVEAKFGNQIEDVLHFEVSVGWRRQYCGIKKTVLNGVTFYFIDNQYYFFRGHVYGDFDDGERFAFFQLAAIEAMERIDFIPDLLHVHDYHTAMIPFLLKEKYRWIQAYEDIETVLTIHNLEFQGQFSEGMLGDLFGVGFERYADGTLRWNNCLNWMKAGILYANRVSTVSPSYAHEIMTSQFGCNLDHILKMESGKVSGIVNGIDADLYNPQTDALLDYHFNQEDLSGKAKNKAKLQERVGLPVRADVPLVGIVSRLTRQKGFDVVVESLHHILQEDVQIVLLGTGDPAFEGAFSWFAQIYPDKLSTNITFDVKLAQEIYAACDLFLMPSRFEPCGLSQMMAMRYGTLPLVHEVGGLRDTVRAFNPIEGSGTGFSFDNLSPYWLNWTFQTALDLYRNHPDIWRNLQKQAMESDFSWDTACKSYLDLYHSLVN</sequence>
<name>GLGA_STRP2</name>
<dbReference type="EC" id="2.4.1.21" evidence="1"/>
<dbReference type="EMBL" id="CP000410">
    <property type="protein sequence ID" value="ABJ54779.1"/>
    <property type="molecule type" value="Genomic_DNA"/>
</dbReference>
<dbReference type="RefSeq" id="WP_000697293.1">
    <property type="nucleotide sequence ID" value="NZ_JAMLJR010000014.1"/>
</dbReference>
<dbReference type="SMR" id="Q04KG5"/>
<dbReference type="CAZy" id="GT5">
    <property type="family name" value="Glycosyltransferase Family 5"/>
</dbReference>
<dbReference type="PaxDb" id="373153-SPD_1008"/>
<dbReference type="KEGG" id="spd:SPD_1008"/>
<dbReference type="eggNOG" id="COG0297">
    <property type="taxonomic scope" value="Bacteria"/>
</dbReference>
<dbReference type="HOGENOM" id="CLU_009583_18_2_9"/>
<dbReference type="BioCyc" id="SPNE373153:G1G6V-1096-MONOMER"/>
<dbReference type="UniPathway" id="UPA00164"/>
<dbReference type="Proteomes" id="UP000001452">
    <property type="component" value="Chromosome"/>
</dbReference>
<dbReference type="GO" id="GO:0009011">
    <property type="term" value="F:alpha-1,4-glucan glucosyltransferase (ADP-glucose donor) activity"/>
    <property type="evidence" value="ECO:0007669"/>
    <property type="project" value="UniProtKB-UniRule"/>
</dbReference>
<dbReference type="GO" id="GO:0004373">
    <property type="term" value="F:alpha-1,4-glucan glucosyltransferase (UDP-glucose donor) activity"/>
    <property type="evidence" value="ECO:0007669"/>
    <property type="project" value="InterPro"/>
</dbReference>
<dbReference type="GO" id="GO:0005978">
    <property type="term" value="P:glycogen biosynthetic process"/>
    <property type="evidence" value="ECO:0007669"/>
    <property type="project" value="UniProtKB-UniRule"/>
</dbReference>
<dbReference type="CDD" id="cd03791">
    <property type="entry name" value="GT5_Glycogen_synthase_DULL1-like"/>
    <property type="match status" value="1"/>
</dbReference>
<dbReference type="Gene3D" id="3.40.50.2000">
    <property type="entry name" value="Glycogen Phosphorylase B"/>
    <property type="match status" value="2"/>
</dbReference>
<dbReference type="HAMAP" id="MF_00484">
    <property type="entry name" value="Glycogen_synth"/>
    <property type="match status" value="1"/>
</dbReference>
<dbReference type="InterPro" id="IPR001296">
    <property type="entry name" value="Glyco_trans_1"/>
</dbReference>
<dbReference type="InterPro" id="IPR011835">
    <property type="entry name" value="GS/SS"/>
</dbReference>
<dbReference type="InterPro" id="IPR013534">
    <property type="entry name" value="Starch_synth_cat_dom"/>
</dbReference>
<dbReference type="NCBIfam" id="TIGR02095">
    <property type="entry name" value="glgA"/>
    <property type="match status" value="1"/>
</dbReference>
<dbReference type="NCBIfam" id="NF001898">
    <property type="entry name" value="PRK00654.1-1"/>
    <property type="match status" value="1"/>
</dbReference>
<dbReference type="PANTHER" id="PTHR45825:SF11">
    <property type="entry name" value="ALPHA AMYLASE DOMAIN-CONTAINING PROTEIN"/>
    <property type="match status" value="1"/>
</dbReference>
<dbReference type="PANTHER" id="PTHR45825">
    <property type="entry name" value="GRANULE-BOUND STARCH SYNTHASE 1, CHLOROPLASTIC/AMYLOPLASTIC"/>
    <property type="match status" value="1"/>
</dbReference>
<dbReference type="Pfam" id="PF08323">
    <property type="entry name" value="Glyco_transf_5"/>
    <property type="match status" value="1"/>
</dbReference>
<dbReference type="Pfam" id="PF00534">
    <property type="entry name" value="Glycos_transf_1"/>
    <property type="match status" value="1"/>
</dbReference>
<dbReference type="SUPFAM" id="SSF53756">
    <property type="entry name" value="UDP-Glycosyltransferase/glycogen phosphorylase"/>
    <property type="match status" value="1"/>
</dbReference>
<reference key="1">
    <citation type="journal article" date="2007" name="J. Bacteriol.">
        <title>Genome sequence of Avery's virulent serotype 2 strain D39 of Streptococcus pneumoniae and comparison with that of unencapsulated laboratory strain R6.</title>
        <authorList>
            <person name="Lanie J.A."/>
            <person name="Ng W.-L."/>
            <person name="Kazmierczak K.M."/>
            <person name="Andrzejewski T.M."/>
            <person name="Davidsen T.M."/>
            <person name="Wayne K.J."/>
            <person name="Tettelin H."/>
            <person name="Glass J.I."/>
            <person name="Winkler M.E."/>
        </authorList>
    </citation>
    <scope>NUCLEOTIDE SEQUENCE [LARGE SCALE GENOMIC DNA]</scope>
    <source>
        <strain>D39 / NCTC 7466</strain>
    </source>
</reference>
<keyword id="KW-0320">Glycogen biosynthesis</keyword>
<keyword id="KW-0328">Glycosyltransferase</keyword>
<keyword id="KW-1185">Reference proteome</keyword>
<keyword id="KW-0808">Transferase</keyword>